<evidence type="ECO:0000255" key="1">
    <source>
        <dbReference type="HAMAP-Rule" id="MF_01643"/>
    </source>
</evidence>
<dbReference type="EC" id="6.3.1.21" evidence="1"/>
<dbReference type="EMBL" id="CP000569">
    <property type="protein sequence ID" value="ABN74198.1"/>
    <property type="molecule type" value="Genomic_DNA"/>
</dbReference>
<dbReference type="RefSeq" id="WP_005597983.1">
    <property type="nucleotide sequence ID" value="NC_009053.1"/>
</dbReference>
<dbReference type="SMR" id="A3N1B2"/>
<dbReference type="STRING" id="416269.APL_1106"/>
<dbReference type="EnsemblBacteria" id="ABN74198">
    <property type="protein sequence ID" value="ABN74198"/>
    <property type="gene ID" value="APL_1106"/>
</dbReference>
<dbReference type="GeneID" id="48599338"/>
<dbReference type="KEGG" id="apl:APL_1106"/>
<dbReference type="eggNOG" id="COG0027">
    <property type="taxonomic scope" value="Bacteria"/>
</dbReference>
<dbReference type="HOGENOM" id="CLU_011534_1_3_6"/>
<dbReference type="UniPathway" id="UPA00074">
    <property type="reaction ID" value="UER00127"/>
</dbReference>
<dbReference type="Proteomes" id="UP000001432">
    <property type="component" value="Chromosome"/>
</dbReference>
<dbReference type="GO" id="GO:0005829">
    <property type="term" value="C:cytosol"/>
    <property type="evidence" value="ECO:0007669"/>
    <property type="project" value="TreeGrafter"/>
</dbReference>
<dbReference type="GO" id="GO:0005524">
    <property type="term" value="F:ATP binding"/>
    <property type="evidence" value="ECO:0007669"/>
    <property type="project" value="UniProtKB-UniRule"/>
</dbReference>
<dbReference type="GO" id="GO:0000287">
    <property type="term" value="F:magnesium ion binding"/>
    <property type="evidence" value="ECO:0007669"/>
    <property type="project" value="InterPro"/>
</dbReference>
<dbReference type="GO" id="GO:0043815">
    <property type="term" value="F:phosphoribosylglycinamide formyltransferase 2 activity"/>
    <property type="evidence" value="ECO:0007669"/>
    <property type="project" value="UniProtKB-UniRule"/>
</dbReference>
<dbReference type="GO" id="GO:0004644">
    <property type="term" value="F:phosphoribosylglycinamide formyltransferase activity"/>
    <property type="evidence" value="ECO:0007669"/>
    <property type="project" value="InterPro"/>
</dbReference>
<dbReference type="GO" id="GO:0006189">
    <property type="term" value="P:'de novo' IMP biosynthetic process"/>
    <property type="evidence" value="ECO:0007669"/>
    <property type="project" value="UniProtKB-UniRule"/>
</dbReference>
<dbReference type="FunFam" id="3.30.1490.20:FF:000013">
    <property type="entry name" value="Formate-dependent phosphoribosylglycinamide formyltransferase"/>
    <property type="match status" value="1"/>
</dbReference>
<dbReference type="FunFam" id="3.40.50.20:FF:000007">
    <property type="entry name" value="Formate-dependent phosphoribosylglycinamide formyltransferase"/>
    <property type="match status" value="1"/>
</dbReference>
<dbReference type="Gene3D" id="3.40.50.20">
    <property type="match status" value="1"/>
</dbReference>
<dbReference type="Gene3D" id="3.30.1490.20">
    <property type="entry name" value="ATP-grasp fold, A domain"/>
    <property type="match status" value="1"/>
</dbReference>
<dbReference type="Gene3D" id="3.30.470.20">
    <property type="entry name" value="ATP-grasp fold, B domain"/>
    <property type="match status" value="1"/>
</dbReference>
<dbReference type="HAMAP" id="MF_01643">
    <property type="entry name" value="PurT"/>
    <property type="match status" value="1"/>
</dbReference>
<dbReference type="InterPro" id="IPR011761">
    <property type="entry name" value="ATP-grasp"/>
</dbReference>
<dbReference type="InterPro" id="IPR003135">
    <property type="entry name" value="ATP-grasp_carboxylate-amine"/>
</dbReference>
<dbReference type="InterPro" id="IPR013815">
    <property type="entry name" value="ATP_grasp_subdomain_1"/>
</dbReference>
<dbReference type="InterPro" id="IPR016185">
    <property type="entry name" value="PreATP-grasp_dom_sf"/>
</dbReference>
<dbReference type="InterPro" id="IPR005862">
    <property type="entry name" value="PurT"/>
</dbReference>
<dbReference type="InterPro" id="IPR054350">
    <property type="entry name" value="PurT/PurK_preATP-grasp"/>
</dbReference>
<dbReference type="InterPro" id="IPR048740">
    <property type="entry name" value="PurT_C"/>
</dbReference>
<dbReference type="NCBIfam" id="NF006766">
    <property type="entry name" value="PRK09288.1"/>
    <property type="match status" value="1"/>
</dbReference>
<dbReference type="NCBIfam" id="TIGR01142">
    <property type="entry name" value="purT"/>
    <property type="match status" value="1"/>
</dbReference>
<dbReference type="PANTHER" id="PTHR43055">
    <property type="entry name" value="FORMATE-DEPENDENT PHOSPHORIBOSYLGLYCINAMIDE FORMYLTRANSFERASE"/>
    <property type="match status" value="1"/>
</dbReference>
<dbReference type="PANTHER" id="PTHR43055:SF1">
    <property type="entry name" value="FORMATE-DEPENDENT PHOSPHORIBOSYLGLYCINAMIDE FORMYLTRANSFERASE"/>
    <property type="match status" value="1"/>
</dbReference>
<dbReference type="Pfam" id="PF02222">
    <property type="entry name" value="ATP-grasp"/>
    <property type="match status" value="1"/>
</dbReference>
<dbReference type="Pfam" id="PF21244">
    <property type="entry name" value="PurT_C"/>
    <property type="match status" value="1"/>
</dbReference>
<dbReference type="Pfam" id="PF22660">
    <property type="entry name" value="RS_preATP-grasp-like"/>
    <property type="match status" value="1"/>
</dbReference>
<dbReference type="SUPFAM" id="SSF56059">
    <property type="entry name" value="Glutathione synthetase ATP-binding domain-like"/>
    <property type="match status" value="1"/>
</dbReference>
<dbReference type="SUPFAM" id="SSF52440">
    <property type="entry name" value="PreATP-grasp domain"/>
    <property type="match status" value="1"/>
</dbReference>
<dbReference type="PROSITE" id="PS50975">
    <property type="entry name" value="ATP_GRASP"/>
    <property type="match status" value="1"/>
</dbReference>
<protein>
    <recommendedName>
        <fullName evidence="1">Formate-dependent phosphoribosylglycinamide formyltransferase</fullName>
        <ecNumber evidence="1">6.3.1.21</ecNumber>
    </recommendedName>
    <alternativeName>
        <fullName evidence="1">5'-phosphoribosylglycinamide transformylase 2</fullName>
    </alternativeName>
    <alternativeName>
        <fullName evidence="1">Formate-dependent GAR transformylase</fullName>
    </alternativeName>
    <alternativeName>
        <fullName evidence="1">GAR transformylase 2</fullName>
        <shortName evidence="1">GART 2</shortName>
    </alternativeName>
    <alternativeName>
        <fullName evidence="1">Non-folate glycinamide ribonucleotide transformylase</fullName>
    </alternativeName>
    <alternativeName>
        <fullName evidence="1">Phosphoribosylglycinamide formyltransferase 2</fullName>
    </alternativeName>
</protein>
<proteinExistence type="inferred from homology"/>
<keyword id="KW-0067">ATP-binding</keyword>
<keyword id="KW-0436">Ligase</keyword>
<keyword id="KW-0460">Magnesium</keyword>
<keyword id="KW-0479">Metal-binding</keyword>
<keyword id="KW-0547">Nucleotide-binding</keyword>
<keyword id="KW-0658">Purine biosynthesis</keyword>
<keyword id="KW-1185">Reference proteome</keyword>
<reference key="1">
    <citation type="journal article" date="2008" name="J. Bacteriol.">
        <title>The complete genome sequence of Actinobacillus pleuropneumoniae L20 (serotype 5b).</title>
        <authorList>
            <person name="Foote S.J."/>
            <person name="Bosse J.T."/>
            <person name="Bouevitch A.B."/>
            <person name="Langford P.R."/>
            <person name="Young N.M."/>
            <person name="Nash J.H.E."/>
        </authorList>
    </citation>
    <scope>NUCLEOTIDE SEQUENCE [LARGE SCALE GENOMIC DNA]</scope>
    <source>
        <strain>L20</strain>
    </source>
</reference>
<name>PURT_ACTP2</name>
<comment type="function">
    <text evidence="1">Involved in the de novo purine biosynthesis. Catalyzes the transfer of formate to 5-phospho-ribosyl-glycinamide (GAR), producing 5-phospho-ribosyl-N-formylglycinamide (FGAR). Formate is provided by PurU via hydrolysis of 10-formyl-tetrahydrofolate.</text>
</comment>
<comment type="catalytic activity">
    <reaction evidence="1">
        <text>N(1)-(5-phospho-beta-D-ribosyl)glycinamide + formate + ATP = N(2)-formyl-N(1)-(5-phospho-beta-D-ribosyl)glycinamide + ADP + phosphate + H(+)</text>
        <dbReference type="Rhea" id="RHEA:24829"/>
        <dbReference type="ChEBI" id="CHEBI:15378"/>
        <dbReference type="ChEBI" id="CHEBI:15740"/>
        <dbReference type="ChEBI" id="CHEBI:30616"/>
        <dbReference type="ChEBI" id="CHEBI:43474"/>
        <dbReference type="ChEBI" id="CHEBI:143788"/>
        <dbReference type="ChEBI" id="CHEBI:147286"/>
        <dbReference type="ChEBI" id="CHEBI:456216"/>
        <dbReference type="EC" id="6.3.1.21"/>
    </reaction>
    <physiologicalReaction direction="left-to-right" evidence="1">
        <dbReference type="Rhea" id="RHEA:24830"/>
    </physiologicalReaction>
</comment>
<comment type="pathway">
    <text evidence="1">Purine metabolism; IMP biosynthesis via de novo pathway; N(2)-formyl-N(1)-(5-phospho-D-ribosyl)glycinamide from N(1)-(5-phospho-D-ribosyl)glycinamide (formate route): step 1/1.</text>
</comment>
<comment type="subunit">
    <text evidence="1">Homodimer.</text>
</comment>
<comment type="similarity">
    <text evidence="1">Belongs to the PurK/PurT family.</text>
</comment>
<sequence length="393" mass="42969">MTTIGTPLRPNATKVMMLGSGELGKEVVIELQRLGVEVIAVDRYENAPAQQVAHRAYTISMLDGAALRALVEKEKPDFIVPEVEAIATATLVELEQEGYNVVPTAKATQLTMNREGIRRLAAEELGLKTSPYRFVDNLEDFKQAVAEIGIPCVVKPIMSSSGHGQSVIKSEDQIQQAWDYSQEGGRAGGGRVIVEGFIKFDYEITQLTVRHVNGTSFLAPIGHRQEDGDYRESWQPQAMSDLALKRAQETAERITTALGGRGIFGVELFVCGDEIIFNEVSPRPHDTGMVTMASQELSQFALHARAILGLPIPEIYQISPAASKAIVVEGKSNNMTFGNLDKVLEEIGTNIRLFGKGEVNGHRRLGVILARDENTEKALAKAERAYAKLAVQL</sequence>
<organism>
    <name type="scientific">Actinobacillus pleuropneumoniae serotype 5b (strain L20)</name>
    <dbReference type="NCBI Taxonomy" id="416269"/>
    <lineage>
        <taxon>Bacteria</taxon>
        <taxon>Pseudomonadati</taxon>
        <taxon>Pseudomonadota</taxon>
        <taxon>Gammaproteobacteria</taxon>
        <taxon>Pasteurellales</taxon>
        <taxon>Pasteurellaceae</taxon>
        <taxon>Actinobacillus</taxon>
    </lineage>
</organism>
<feature type="chain" id="PRO_0000319115" description="Formate-dependent phosphoribosylglycinamide formyltransferase">
    <location>
        <begin position="1"/>
        <end position="393"/>
    </location>
</feature>
<feature type="domain" description="ATP-grasp" evidence="1">
    <location>
        <begin position="119"/>
        <end position="308"/>
    </location>
</feature>
<feature type="binding site" evidence="1">
    <location>
        <begin position="22"/>
        <end position="23"/>
    </location>
    <ligand>
        <name>N(1)-(5-phospho-beta-D-ribosyl)glycinamide</name>
        <dbReference type="ChEBI" id="CHEBI:143788"/>
    </ligand>
</feature>
<feature type="binding site" evidence="1">
    <location>
        <position position="82"/>
    </location>
    <ligand>
        <name>N(1)-(5-phospho-beta-D-ribosyl)glycinamide</name>
        <dbReference type="ChEBI" id="CHEBI:143788"/>
    </ligand>
</feature>
<feature type="binding site" evidence="1">
    <location>
        <position position="114"/>
    </location>
    <ligand>
        <name>ATP</name>
        <dbReference type="ChEBI" id="CHEBI:30616"/>
    </ligand>
</feature>
<feature type="binding site" evidence="1">
    <location>
        <position position="155"/>
    </location>
    <ligand>
        <name>ATP</name>
        <dbReference type="ChEBI" id="CHEBI:30616"/>
    </ligand>
</feature>
<feature type="binding site" evidence="1">
    <location>
        <begin position="160"/>
        <end position="165"/>
    </location>
    <ligand>
        <name>ATP</name>
        <dbReference type="ChEBI" id="CHEBI:30616"/>
    </ligand>
</feature>
<feature type="binding site" evidence="1">
    <location>
        <begin position="195"/>
        <end position="198"/>
    </location>
    <ligand>
        <name>ATP</name>
        <dbReference type="ChEBI" id="CHEBI:30616"/>
    </ligand>
</feature>
<feature type="binding site" evidence="1">
    <location>
        <position position="203"/>
    </location>
    <ligand>
        <name>ATP</name>
        <dbReference type="ChEBI" id="CHEBI:30616"/>
    </ligand>
</feature>
<feature type="binding site" evidence="1">
    <location>
        <position position="267"/>
    </location>
    <ligand>
        <name>Mg(2+)</name>
        <dbReference type="ChEBI" id="CHEBI:18420"/>
    </ligand>
</feature>
<feature type="binding site" evidence="1">
    <location>
        <position position="279"/>
    </location>
    <ligand>
        <name>Mg(2+)</name>
        <dbReference type="ChEBI" id="CHEBI:18420"/>
    </ligand>
</feature>
<feature type="binding site" evidence="1">
    <location>
        <position position="286"/>
    </location>
    <ligand>
        <name>N(1)-(5-phospho-beta-D-ribosyl)glycinamide</name>
        <dbReference type="ChEBI" id="CHEBI:143788"/>
    </ligand>
</feature>
<feature type="binding site" evidence="1">
    <location>
        <position position="356"/>
    </location>
    <ligand>
        <name>N(1)-(5-phospho-beta-D-ribosyl)glycinamide</name>
        <dbReference type="ChEBI" id="CHEBI:143788"/>
    </ligand>
</feature>
<feature type="binding site" evidence="1">
    <location>
        <begin position="363"/>
        <end position="364"/>
    </location>
    <ligand>
        <name>N(1)-(5-phospho-beta-D-ribosyl)glycinamide</name>
        <dbReference type="ChEBI" id="CHEBI:143788"/>
    </ligand>
</feature>
<gene>
    <name evidence="1" type="primary">purT</name>
    <name type="ordered locus">APL_1106</name>
</gene>
<accession>A3N1B2</accession>